<gene>
    <name evidence="1" type="primary">der</name>
    <name type="synonym">engA</name>
    <name type="ordered locus">ECIAI39_2712</name>
</gene>
<keyword id="KW-0342">GTP-binding</keyword>
<keyword id="KW-0547">Nucleotide-binding</keyword>
<keyword id="KW-0677">Repeat</keyword>
<keyword id="KW-0690">Ribosome biogenesis</keyword>
<dbReference type="EMBL" id="CU928164">
    <property type="protein sequence ID" value="CAR18835.1"/>
    <property type="molecule type" value="Genomic_DNA"/>
</dbReference>
<dbReference type="RefSeq" id="WP_001296291.1">
    <property type="nucleotide sequence ID" value="NC_011750.1"/>
</dbReference>
<dbReference type="RefSeq" id="YP_002408650.1">
    <property type="nucleotide sequence ID" value="NC_011750.1"/>
</dbReference>
<dbReference type="SMR" id="B7NQW0"/>
<dbReference type="STRING" id="585057.ECIAI39_2712"/>
<dbReference type="KEGG" id="ect:ECIAI39_2712"/>
<dbReference type="PATRIC" id="fig|585057.6.peg.2820"/>
<dbReference type="HOGENOM" id="CLU_016077_6_2_6"/>
<dbReference type="Proteomes" id="UP000000749">
    <property type="component" value="Chromosome"/>
</dbReference>
<dbReference type="GO" id="GO:0005525">
    <property type="term" value="F:GTP binding"/>
    <property type="evidence" value="ECO:0007669"/>
    <property type="project" value="UniProtKB-UniRule"/>
</dbReference>
<dbReference type="GO" id="GO:0043022">
    <property type="term" value="F:ribosome binding"/>
    <property type="evidence" value="ECO:0007669"/>
    <property type="project" value="TreeGrafter"/>
</dbReference>
<dbReference type="GO" id="GO:0042254">
    <property type="term" value="P:ribosome biogenesis"/>
    <property type="evidence" value="ECO:0007669"/>
    <property type="project" value="UniProtKB-KW"/>
</dbReference>
<dbReference type="CDD" id="cd01894">
    <property type="entry name" value="EngA1"/>
    <property type="match status" value="1"/>
</dbReference>
<dbReference type="CDD" id="cd01895">
    <property type="entry name" value="EngA2"/>
    <property type="match status" value="1"/>
</dbReference>
<dbReference type="FunFam" id="3.30.300.20:FF:000004">
    <property type="entry name" value="GTPase Der"/>
    <property type="match status" value="1"/>
</dbReference>
<dbReference type="FunFam" id="3.40.50.300:FF:000040">
    <property type="entry name" value="GTPase Der"/>
    <property type="match status" value="1"/>
</dbReference>
<dbReference type="FunFam" id="3.40.50.300:FF:000057">
    <property type="entry name" value="GTPase Der"/>
    <property type="match status" value="1"/>
</dbReference>
<dbReference type="Gene3D" id="3.30.300.20">
    <property type="match status" value="1"/>
</dbReference>
<dbReference type="Gene3D" id="3.40.50.300">
    <property type="entry name" value="P-loop containing nucleotide triphosphate hydrolases"/>
    <property type="match status" value="2"/>
</dbReference>
<dbReference type="HAMAP" id="MF_00195">
    <property type="entry name" value="GTPase_Der"/>
    <property type="match status" value="1"/>
</dbReference>
<dbReference type="InterPro" id="IPR031166">
    <property type="entry name" value="G_ENGA"/>
</dbReference>
<dbReference type="InterPro" id="IPR006073">
    <property type="entry name" value="GTP-bd"/>
</dbReference>
<dbReference type="InterPro" id="IPR016484">
    <property type="entry name" value="GTPase_Der"/>
</dbReference>
<dbReference type="InterPro" id="IPR032859">
    <property type="entry name" value="KH_dom-like"/>
</dbReference>
<dbReference type="InterPro" id="IPR015946">
    <property type="entry name" value="KH_dom-like_a/b"/>
</dbReference>
<dbReference type="InterPro" id="IPR027417">
    <property type="entry name" value="P-loop_NTPase"/>
</dbReference>
<dbReference type="InterPro" id="IPR005225">
    <property type="entry name" value="Small_GTP-bd"/>
</dbReference>
<dbReference type="NCBIfam" id="TIGR03594">
    <property type="entry name" value="GTPase_EngA"/>
    <property type="match status" value="1"/>
</dbReference>
<dbReference type="NCBIfam" id="TIGR00231">
    <property type="entry name" value="small_GTP"/>
    <property type="match status" value="2"/>
</dbReference>
<dbReference type="PANTHER" id="PTHR43834">
    <property type="entry name" value="GTPASE DER"/>
    <property type="match status" value="1"/>
</dbReference>
<dbReference type="PANTHER" id="PTHR43834:SF6">
    <property type="entry name" value="GTPASE DER"/>
    <property type="match status" value="1"/>
</dbReference>
<dbReference type="Pfam" id="PF14714">
    <property type="entry name" value="KH_dom-like"/>
    <property type="match status" value="1"/>
</dbReference>
<dbReference type="Pfam" id="PF01926">
    <property type="entry name" value="MMR_HSR1"/>
    <property type="match status" value="2"/>
</dbReference>
<dbReference type="PIRSF" id="PIRSF006485">
    <property type="entry name" value="GTP-binding_EngA"/>
    <property type="match status" value="1"/>
</dbReference>
<dbReference type="PRINTS" id="PR00326">
    <property type="entry name" value="GTP1OBG"/>
</dbReference>
<dbReference type="SUPFAM" id="SSF52540">
    <property type="entry name" value="P-loop containing nucleoside triphosphate hydrolases"/>
    <property type="match status" value="2"/>
</dbReference>
<dbReference type="PROSITE" id="PS51712">
    <property type="entry name" value="G_ENGA"/>
    <property type="match status" value="2"/>
</dbReference>
<comment type="function">
    <text evidence="1">GTPase that plays an essential role in the late steps of ribosome biogenesis.</text>
</comment>
<comment type="subunit">
    <text evidence="1">Associates with the 50S ribosomal subunit.</text>
</comment>
<comment type="similarity">
    <text evidence="1">Belongs to the TRAFAC class TrmE-Era-EngA-EngB-Septin-like GTPase superfamily. EngA (Der) GTPase family.</text>
</comment>
<proteinExistence type="inferred from homology"/>
<organism>
    <name type="scientific">Escherichia coli O7:K1 (strain IAI39 / ExPEC)</name>
    <dbReference type="NCBI Taxonomy" id="585057"/>
    <lineage>
        <taxon>Bacteria</taxon>
        <taxon>Pseudomonadati</taxon>
        <taxon>Pseudomonadota</taxon>
        <taxon>Gammaproteobacteria</taxon>
        <taxon>Enterobacterales</taxon>
        <taxon>Enterobacteriaceae</taxon>
        <taxon>Escherichia</taxon>
    </lineage>
</organism>
<feature type="chain" id="PRO_1000118644" description="GTPase Der">
    <location>
        <begin position="1"/>
        <end position="490"/>
    </location>
</feature>
<feature type="domain" description="EngA-type G 1">
    <location>
        <begin position="3"/>
        <end position="166"/>
    </location>
</feature>
<feature type="domain" description="EngA-type G 2">
    <location>
        <begin position="203"/>
        <end position="376"/>
    </location>
</feature>
<feature type="domain" description="KH-like" evidence="1">
    <location>
        <begin position="377"/>
        <end position="461"/>
    </location>
</feature>
<feature type="binding site" evidence="1">
    <location>
        <begin position="9"/>
        <end position="16"/>
    </location>
    <ligand>
        <name>GTP</name>
        <dbReference type="ChEBI" id="CHEBI:37565"/>
        <label>1</label>
    </ligand>
</feature>
<feature type="binding site" evidence="1">
    <location>
        <begin position="56"/>
        <end position="60"/>
    </location>
    <ligand>
        <name>GTP</name>
        <dbReference type="ChEBI" id="CHEBI:37565"/>
        <label>1</label>
    </ligand>
</feature>
<feature type="binding site" evidence="1">
    <location>
        <begin position="118"/>
        <end position="121"/>
    </location>
    <ligand>
        <name>GTP</name>
        <dbReference type="ChEBI" id="CHEBI:37565"/>
        <label>1</label>
    </ligand>
</feature>
<feature type="binding site" evidence="1">
    <location>
        <begin position="209"/>
        <end position="216"/>
    </location>
    <ligand>
        <name>GTP</name>
        <dbReference type="ChEBI" id="CHEBI:37565"/>
        <label>2</label>
    </ligand>
</feature>
<feature type="binding site" evidence="1">
    <location>
        <begin position="256"/>
        <end position="260"/>
    </location>
    <ligand>
        <name>GTP</name>
        <dbReference type="ChEBI" id="CHEBI:37565"/>
        <label>2</label>
    </ligand>
</feature>
<feature type="binding site" evidence="1">
    <location>
        <begin position="321"/>
        <end position="324"/>
    </location>
    <ligand>
        <name>GTP</name>
        <dbReference type="ChEBI" id="CHEBI:37565"/>
        <label>2</label>
    </ligand>
</feature>
<reference key="1">
    <citation type="journal article" date="2009" name="PLoS Genet.">
        <title>Organised genome dynamics in the Escherichia coli species results in highly diverse adaptive paths.</title>
        <authorList>
            <person name="Touchon M."/>
            <person name="Hoede C."/>
            <person name="Tenaillon O."/>
            <person name="Barbe V."/>
            <person name="Baeriswyl S."/>
            <person name="Bidet P."/>
            <person name="Bingen E."/>
            <person name="Bonacorsi S."/>
            <person name="Bouchier C."/>
            <person name="Bouvet O."/>
            <person name="Calteau A."/>
            <person name="Chiapello H."/>
            <person name="Clermont O."/>
            <person name="Cruveiller S."/>
            <person name="Danchin A."/>
            <person name="Diard M."/>
            <person name="Dossat C."/>
            <person name="Karoui M.E."/>
            <person name="Frapy E."/>
            <person name="Garry L."/>
            <person name="Ghigo J.M."/>
            <person name="Gilles A.M."/>
            <person name="Johnson J."/>
            <person name="Le Bouguenec C."/>
            <person name="Lescat M."/>
            <person name="Mangenot S."/>
            <person name="Martinez-Jehanne V."/>
            <person name="Matic I."/>
            <person name="Nassif X."/>
            <person name="Oztas S."/>
            <person name="Petit M.A."/>
            <person name="Pichon C."/>
            <person name="Rouy Z."/>
            <person name="Ruf C.S."/>
            <person name="Schneider D."/>
            <person name="Tourret J."/>
            <person name="Vacherie B."/>
            <person name="Vallenet D."/>
            <person name="Medigue C."/>
            <person name="Rocha E.P.C."/>
            <person name="Denamur E."/>
        </authorList>
    </citation>
    <scope>NUCLEOTIDE SEQUENCE [LARGE SCALE GENOMIC DNA]</scope>
    <source>
        <strain>IAI39 / ExPEC</strain>
    </source>
</reference>
<protein>
    <recommendedName>
        <fullName evidence="1">GTPase Der</fullName>
    </recommendedName>
    <alternativeName>
        <fullName evidence="1">GTP-binding protein EngA</fullName>
    </alternativeName>
</protein>
<name>DER_ECO7I</name>
<accession>B7NQW0</accession>
<sequence>MVPVVALVGRPNVGKSTLFNRLTRTRDALVADFPGLTRDRKYGRAEIEGREFICIDTGGIDGTEDGVETRMAEQSLLAIEEADVVLFMVDARAGLMPADEAIAKHLRSREKPTFLVANKTDGLDPDQAVVDFYALGLGEIYPIAASHGRGVLSLLEHVLLPWMEDLAPQEEVDEDAEYWAQFEAEENGEEEEEDDFDPQSLPIKLAIVGRPNVGKSTLTNRILGEERVVVYDMPGTTRDSIYIPMERDGREYVLIDTAGVRKRGKITDAVEKFSVIKTLQAIEDANVVMLVIDAREGISDQDLSLLGFILNSGRSLVIVVNKWDGLSQEVKEQVKETLDFRLGFIDFARVHFISALHGSGVGNLFESVREAYDSSTRRVGTSMLTRIMTMAVEDHQPPLVRGRRVKLKYAHAGGYNPPIVVIHGNQVKDLPDSYKRYLMNYFRKSLDVMGSPIRIQFKEGENPYANKRNTLTPTQMRKRKRLMKHIKKSK</sequence>
<evidence type="ECO:0000255" key="1">
    <source>
        <dbReference type="HAMAP-Rule" id="MF_00195"/>
    </source>
</evidence>